<evidence type="ECO:0000255" key="1">
    <source>
        <dbReference type="HAMAP-Rule" id="MF_00402"/>
    </source>
</evidence>
<evidence type="ECO:0000305" key="2"/>
<name>RL19_WOLTR</name>
<proteinExistence type="inferred from homology"/>
<feature type="chain" id="PRO_0000226882" description="Large ribosomal subunit protein bL19">
    <location>
        <begin position="1"/>
        <end position="125"/>
    </location>
</feature>
<keyword id="KW-1185">Reference proteome</keyword>
<keyword id="KW-0687">Ribonucleoprotein</keyword>
<keyword id="KW-0689">Ribosomal protein</keyword>
<protein>
    <recommendedName>
        <fullName evidence="1">Large ribosomal subunit protein bL19</fullName>
    </recommendedName>
    <alternativeName>
        <fullName evidence="2">50S ribosomal protein L19</fullName>
    </alternativeName>
</protein>
<reference key="1">
    <citation type="journal article" date="2005" name="PLoS Biol.">
        <title>The Wolbachia genome of Brugia malayi: endosymbiont evolution within a human pathogenic nematode.</title>
        <authorList>
            <person name="Foster J."/>
            <person name="Ganatra M."/>
            <person name="Kamal I."/>
            <person name="Ware J."/>
            <person name="Makarova K."/>
            <person name="Ivanova N."/>
            <person name="Bhattacharyya A."/>
            <person name="Kapatral V."/>
            <person name="Kumar S."/>
            <person name="Posfai J."/>
            <person name="Vincze T."/>
            <person name="Ingram J."/>
            <person name="Moran L."/>
            <person name="Lapidus A."/>
            <person name="Omelchenko M."/>
            <person name="Kyrpides N."/>
            <person name="Ghedin E."/>
            <person name="Wang S."/>
            <person name="Goltsman E."/>
            <person name="Joukov V."/>
            <person name="Ostrovskaya O."/>
            <person name="Tsukerman K."/>
            <person name="Mazur M."/>
            <person name="Comb D."/>
            <person name="Koonin E."/>
            <person name="Slatko B."/>
        </authorList>
    </citation>
    <scope>NUCLEOTIDE SEQUENCE [LARGE SCALE GENOMIC DNA]</scope>
    <source>
        <strain>TRS</strain>
    </source>
</reference>
<gene>
    <name evidence="1" type="primary">rplS</name>
    <name type="ordered locus">Wbm0229</name>
</gene>
<organism>
    <name type="scientific">Wolbachia sp. subsp. Brugia malayi (strain TRS)</name>
    <dbReference type="NCBI Taxonomy" id="292805"/>
    <lineage>
        <taxon>Bacteria</taxon>
        <taxon>Pseudomonadati</taxon>
        <taxon>Pseudomonadota</taxon>
        <taxon>Alphaproteobacteria</taxon>
        <taxon>Rickettsiales</taxon>
        <taxon>Anaplasmataceae</taxon>
        <taxon>Wolbachieae</taxon>
        <taxon>Wolbachia</taxon>
    </lineage>
</organism>
<accession>Q5GT54</accession>
<sequence>MTNLLKKFNEQQMQVLAKEVPEFRPGDDLKVTFKVVDSTSERIQIFEGVCISKRNRGLHSSFAVRKVSHGESIVSQFFIYSPALVSVQVTRRGKVRRAKLYYLCKLFGKAARIKERATYKNNKSN</sequence>
<dbReference type="EMBL" id="AE017321">
    <property type="protein sequence ID" value="AAW70820.1"/>
    <property type="molecule type" value="Genomic_DNA"/>
</dbReference>
<dbReference type="RefSeq" id="WP_011256430.1">
    <property type="nucleotide sequence ID" value="NC_006833.1"/>
</dbReference>
<dbReference type="SMR" id="Q5GT54"/>
<dbReference type="STRING" id="292805.Wbm0229"/>
<dbReference type="KEGG" id="wbm:Wbm0229"/>
<dbReference type="eggNOG" id="COG0335">
    <property type="taxonomic scope" value="Bacteria"/>
</dbReference>
<dbReference type="HOGENOM" id="CLU_103507_2_1_5"/>
<dbReference type="Proteomes" id="UP000000534">
    <property type="component" value="Chromosome"/>
</dbReference>
<dbReference type="GO" id="GO:0022625">
    <property type="term" value="C:cytosolic large ribosomal subunit"/>
    <property type="evidence" value="ECO:0007669"/>
    <property type="project" value="TreeGrafter"/>
</dbReference>
<dbReference type="GO" id="GO:0003735">
    <property type="term" value="F:structural constituent of ribosome"/>
    <property type="evidence" value="ECO:0007669"/>
    <property type="project" value="InterPro"/>
</dbReference>
<dbReference type="GO" id="GO:0006412">
    <property type="term" value="P:translation"/>
    <property type="evidence" value="ECO:0007669"/>
    <property type="project" value="UniProtKB-UniRule"/>
</dbReference>
<dbReference type="Gene3D" id="2.30.30.790">
    <property type="match status" value="1"/>
</dbReference>
<dbReference type="HAMAP" id="MF_00402">
    <property type="entry name" value="Ribosomal_bL19"/>
    <property type="match status" value="1"/>
</dbReference>
<dbReference type="InterPro" id="IPR001857">
    <property type="entry name" value="Ribosomal_bL19"/>
</dbReference>
<dbReference type="InterPro" id="IPR038657">
    <property type="entry name" value="Ribosomal_bL19_sf"/>
</dbReference>
<dbReference type="InterPro" id="IPR008991">
    <property type="entry name" value="Translation_prot_SH3-like_sf"/>
</dbReference>
<dbReference type="NCBIfam" id="TIGR01024">
    <property type="entry name" value="rplS_bact"/>
    <property type="match status" value="1"/>
</dbReference>
<dbReference type="PANTHER" id="PTHR15680:SF9">
    <property type="entry name" value="LARGE RIBOSOMAL SUBUNIT PROTEIN BL19M"/>
    <property type="match status" value="1"/>
</dbReference>
<dbReference type="PANTHER" id="PTHR15680">
    <property type="entry name" value="RIBOSOMAL PROTEIN L19"/>
    <property type="match status" value="1"/>
</dbReference>
<dbReference type="Pfam" id="PF01245">
    <property type="entry name" value="Ribosomal_L19"/>
    <property type="match status" value="1"/>
</dbReference>
<dbReference type="PIRSF" id="PIRSF002191">
    <property type="entry name" value="Ribosomal_L19"/>
    <property type="match status" value="1"/>
</dbReference>
<dbReference type="PRINTS" id="PR00061">
    <property type="entry name" value="RIBOSOMALL19"/>
</dbReference>
<dbReference type="SUPFAM" id="SSF50104">
    <property type="entry name" value="Translation proteins SH3-like domain"/>
    <property type="match status" value="1"/>
</dbReference>
<comment type="function">
    <text evidence="1">This protein is located at the 30S-50S ribosomal subunit interface and may play a role in the structure and function of the aminoacyl-tRNA binding site.</text>
</comment>
<comment type="similarity">
    <text evidence="1">Belongs to the bacterial ribosomal protein bL19 family.</text>
</comment>